<dbReference type="EC" id="2.1.1.277"/>
<dbReference type="EMBL" id="HM242246">
    <property type="protein sequence ID" value="ADI87451.1"/>
    <property type="molecule type" value="mRNA"/>
</dbReference>
<dbReference type="EMBL" id="EU956261">
    <property type="protein sequence ID" value="ACG28379.1"/>
    <property type="molecule type" value="mRNA"/>
</dbReference>
<dbReference type="RefSeq" id="NP_001147683.1">
    <property type="nucleotide sequence ID" value="NM_001154211.1"/>
</dbReference>
<dbReference type="SMR" id="B6SU46"/>
<dbReference type="FunCoup" id="B6SU46">
    <property type="interactions" value="14"/>
</dbReference>
<dbReference type="STRING" id="4577.B6SU46"/>
<dbReference type="PaxDb" id="4577-GRMZM2G116966_P01"/>
<dbReference type="eggNOG" id="ENOG502QQVK">
    <property type="taxonomic scope" value="Eukaryota"/>
</dbReference>
<dbReference type="InParanoid" id="B6SU46"/>
<dbReference type="BRENDA" id="2.1.1.277">
    <property type="organism ID" value="6752"/>
</dbReference>
<dbReference type="SABIO-RK" id="B6SU46"/>
<dbReference type="Proteomes" id="UP000007305">
    <property type="component" value="Unplaced"/>
</dbReference>
<dbReference type="ExpressionAtlas" id="B6SU46">
    <property type="expression patterns" value="baseline and differential"/>
</dbReference>
<dbReference type="GO" id="GO:0008757">
    <property type="term" value="F:S-adenosylmethionine-dependent methyltransferase activity"/>
    <property type="evidence" value="ECO:0000318"/>
    <property type="project" value="GO_Central"/>
</dbReference>
<dbReference type="GO" id="GO:0006952">
    <property type="term" value="P:defense response"/>
    <property type="evidence" value="ECO:0007669"/>
    <property type="project" value="UniProtKB-KW"/>
</dbReference>
<dbReference type="GO" id="GO:0032259">
    <property type="term" value="P:methylation"/>
    <property type="evidence" value="ECO:0000318"/>
    <property type="project" value="GO_Central"/>
</dbReference>
<dbReference type="Gene3D" id="1.10.1200.270">
    <property type="entry name" value="Methyltransferase, alpha-helical capping domain"/>
    <property type="match status" value="1"/>
</dbReference>
<dbReference type="Gene3D" id="3.40.50.150">
    <property type="entry name" value="Vaccinia Virus protein VP39"/>
    <property type="match status" value="1"/>
</dbReference>
<dbReference type="InterPro" id="IPR005299">
    <property type="entry name" value="MeTrfase_7"/>
</dbReference>
<dbReference type="InterPro" id="IPR042086">
    <property type="entry name" value="MeTrfase_capping"/>
</dbReference>
<dbReference type="InterPro" id="IPR029063">
    <property type="entry name" value="SAM-dependent_MTases_sf"/>
</dbReference>
<dbReference type="PANTHER" id="PTHR31009">
    <property type="entry name" value="S-ADENOSYL-L-METHIONINE:CARBOXYL METHYLTRANSFERASE FAMILY PROTEIN"/>
    <property type="match status" value="1"/>
</dbReference>
<dbReference type="Pfam" id="PF03492">
    <property type="entry name" value="Methyltransf_7"/>
    <property type="match status" value="1"/>
</dbReference>
<dbReference type="SUPFAM" id="SSF53335">
    <property type="entry name" value="S-adenosyl-L-methionine-dependent methyltransferases"/>
    <property type="match status" value="1"/>
</dbReference>
<proteinExistence type="evidence at protein level"/>
<comment type="function">
    <text evidence="4">Methyltransferase involved in the biosynthesis of methyl anthranilate in response to stresses. Utilizes anthranilic acid as substrate. Produces exclusively the O-methyl ester.</text>
</comment>
<comment type="catalytic activity">
    <reaction evidence="4">
        <text>anthranilate + S-adenosyl-L-methionine = O-methyl anthranilate + S-adenosyl-L-homocysteine</text>
        <dbReference type="Rhea" id="RHEA:36103"/>
        <dbReference type="ChEBI" id="CHEBI:16567"/>
        <dbReference type="ChEBI" id="CHEBI:57856"/>
        <dbReference type="ChEBI" id="CHEBI:59789"/>
        <dbReference type="ChEBI" id="CHEBI:73244"/>
        <dbReference type="EC" id="2.1.1.277"/>
    </reaction>
</comment>
<comment type="biophysicochemical properties">
    <kinetics>
        <KM evidence="4">311 uM for anthranilic acid</KM>
        <KM evidence="4">94 uM for S-adenosyl-L-methionine</KM>
        <text>kcat is 0.37 sec(-1) with anthranilic acid as substrate.</text>
    </kinetics>
</comment>
<comment type="induction">
    <text evidence="4">Slightly up-regulated by herbivory and jasmonic acid, but not by salicylic acid.</text>
</comment>
<comment type="similarity">
    <text evidence="5">Belongs to the methyltransferase superfamily. Type-7 methyltransferase family. SABATH subfamily.</text>
</comment>
<accession>B6SU46</accession>
<gene>
    <name type="primary">AAMT2</name>
    <name type="synonym">OMT2</name>
</gene>
<evidence type="ECO:0000250" key="1">
    <source>
        <dbReference type="UniProtKB" id="A0A6C0WW36"/>
    </source>
</evidence>
<evidence type="ECO:0000250" key="2">
    <source>
        <dbReference type="UniProtKB" id="B2KPR3"/>
    </source>
</evidence>
<evidence type="ECO:0000250" key="3">
    <source>
        <dbReference type="UniProtKB" id="Q9FLN8"/>
    </source>
</evidence>
<evidence type="ECO:0000269" key="4">
    <source>
    </source>
</evidence>
<evidence type="ECO:0000305" key="5"/>
<protein>
    <recommendedName>
        <fullName>Anthranilate O-methyltransferase 2</fullName>
        <ecNumber>2.1.1.277</ecNumber>
    </recommendedName>
    <alternativeName>
        <fullName>Anthranilic acid methyltransferase 2</fullName>
    </alternativeName>
    <alternativeName>
        <fullName>Benzoate carboxyl methyltransferase</fullName>
    </alternativeName>
    <alternativeName>
        <fullName>O-methyltransferase 2</fullName>
    </alternativeName>
</protein>
<name>AAMT2_MAIZE</name>
<feature type="chain" id="PRO_0000423912" description="Anthranilate O-methyltransferase 2">
    <location>
        <begin position="1"/>
        <end position="374"/>
    </location>
</feature>
<feature type="binding site" evidence="2">
    <location>
        <position position="18"/>
    </location>
    <ligand>
        <name>S-adenosyl-L-homocysteine</name>
        <dbReference type="ChEBI" id="CHEBI:57856"/>
    </ligand>
</feature>
<feature type="binding site" evidence="2">
    <location>
        <position position="25"/>
    </location>
    <ligand>
        <name>anthranilate</name>
        <dbReference type="ChEBI" id="CHEBI:16567"/>
    </ligand>
</feature>
<feature type="binding site" evidence="2">
    <location>
        <position position="59"/>
    </location>
    <ligand>
        <name>S-adenosyl-L-homocysteine</name>
        <dbReference type="ChEBI" id="CHEBI:57856"/>
    </ligand>
</feature>
<feature type="binding site" evidence="2">
    <location>
        <position position="64"/>
    </location>
    <ligand>
        <name>S-adenosyl-L-homocysteine</name>
        <dbReference type="ChEBI" id="CHEBI:57856"/>
    </ligand>
</feature>
<feature type="binding site" evidence="2">
    <location>
        <position position="98"/>
    </location>
    <ligand>
        <name>S-adenosyl-L-homocysteine</name>
        <dbReference type="ChEBI" id="CHEBI:57856"/>
    </ligand>
</feature>
<feature type="binding site" evidence="1">
    <location>
        <position position="99"/>
    </location>
    <ligand>
        <name>S-adenosyl-L-homocysteine</name>
        <dbReference type="ChEBI" id="CHEBI:57856"/>
    </ligand>
</feature>
<feature type="binding site" evidence="2">
    <location>
        <position position="142"/>
    </location>
    <ligand>
        <name>S-adenosyl-L-homocysteine</name>
        <dbReference type="ChEBI" id="CHEBI:57856"/>
    </ligand>
</feature>
<feature type="binding site" evidence="2">
    <location>
        <position position="143"/>
    </location>
    <ligand>
        <name>S-adenosyl-L-homocysteine</name>
        <dbReference type="ChEBI" id="CHEBI:57856"/>
    </ligand>
</feature>
<feature type="binding site" evidence="2">
    <location>
        <position position="164"/>
    </location>
    <ligand>
        <name>anthranilate</name>
        <dbReference type="ChEBI" id="CHEBI:16567"/>
    </ligand>
</feature>
<feature type="binding site" evidence="3">
    <location>
        <position position="261"/>
    </location>
    <ligand>
        <name>Mg(2+)</name>
        <dbReference type="ChEBI" id="CHEBI:18420"/>
    </ligand>
</feature>
<feature type="binding site" evidence="3">
    <location>
        <position position="263"/>
    </location>
    <ligand>
        <name>Mg(2+)</name>
        <dbReference type="ChEBI" id="CHEBI:18420"/>
    </ligand>
</feature>
<keyword id="KW-0460">Magnesium</keyword>
<keyword id="KW-0479">Metal-binding</keyword>
<keyword id="KW-0489">Methyltransferase</keyword>
<keyword id="KW-0611">Plant defense</keyword>
<keyword id="KW-1185">Reference proteome</keyword>
<keyword id="KW-0949">S-adenosyl-L-methionine</keyword>
<keyword id="KW-0808">Transferase</keyword>
<organism>
    <name type="scientific">Zea mays</name>
    <name type="common">Maize</name>
    <dbReference type="NCBI Taxonomy" id="4577"/>
    <lineage>
        <taxon>Eukaryota</taxon>
        <taxon>Viridiplantae</taxon>
        <taxon>Streptophyta</taxon>
        <taxon>Embryophyta</taxon>
        <taxon>Tracheophyta</taxon>
        <taxon>Spermatophyta</taxon>
        <taxon>Magnoliopsida</taxon>
        <taxon>Liliopsida</taxon>
        <taxon>Poales</taxon>
        <taxon>Poaceae</taxon>
        <taxon>PACMAD clade</taxon>
        <taxon>Panicoideae</taxon>
        <taxon>Andropogonodae</taxon>
        <taxon>Andropogoneae</taxon>
        <taxon>Tripsacinae</taxon>
        <taxon>Zea</taxon>
    </lineage>
</organism>
<reference key="1">
    <citation type="journal article" date="2010" name="Plant Physiol.">
        <title>Herbivore-induced SABATH methyltransferases of maize that methylate anthranilic acid using s-adenosyl-L-methionine.</title>
        <authorList>
            <person name="Kollner T.G."/>
            <person name="Lenk C."/>
            <person name="Zhao N."/>
            <person name="Seidl-Adams I."/>
            <person name="Gershenzon J."/>
            <person name="Chen F."/>
            <person name="Degenhardt J."/>
        </authorList>
    </citation>
    <scope>NUCLEOTIDE SEQUENCE [MRNA]</scope>
    <scope>FUNCTION</scope>
    <scope>CATALYTIC ACTIVITY</scope>
    <scope>BIOPHYSICOCHEMICAL PROPERTIES</scope>
    <scope>INDUCTION BY HERBIVORY; JASMONIC ACID AND SALICYLIC ACID</scope>
    <source>
        <strain>cv. Delprim</strain>
    </source>
</reference>
<reference key="2">
    <citation type="journal article" date="2009" name="Plant Mol. Biol.">
        <title>Insights into corn genes derived from large-scale cDNA sequencing.</title>
        <authorList>
            <person name="Alexandrov N.N."/>
            <person name="Brover V.V."/>
            <person name="Freidin S."/>
            <person name="Troukhan M.E."/>
            <person name="Tatarinova T.V."/>
            <person name="Zhang H."/>
            <person name="Swaller T.J."/>
            <person name="Lu Y.-P."/>
            <person name="Bouck J."/>
            <person name="Flavell R.B."/>
            <person name="Feldmann K.A."/>
        </authorList>
    </citation>
    <scope>NUCLEOTIDE SEQUENCE [LARGE SCALE MRNA]</scope>
</reference>
<sequence length="374" mass="42666">MRIERDLHMATGDGETSYTKNSRIQEKTMFQIKPVLEEATRAVYTALHPQTMVVADLGCSSGPNTLRFVSEVIGIIARHCKEYGRQHDHTQLQFFLNDLPGNDFNNLFQLIQQFNKSTAINHKSEAAEALPPPCYISGLPGSYYTRIFPSESVHLFHSLFCLQWRSEAPEGNKKTCLDIYITKTMSPSMVKLFQQQFQKDFSLFLRLRYEELVSGGQMVLTFIGRKHENVFTGESNHLYGLLAQSLKSLVDEGLVEKEKLESFYLPMYSPSVGEVEAILKQVGLFNMNHVKVFQTNWDPYDDLESDVVHNSIRSGENVAKCLRAVMQPLVASQFGEPILDKLFKEYARRVAKHLENEKTKHAIIVLSIEKAIHL</sequence>